<evidence type="ECO:0000250" key="1">
    <source>
        <dbReference type="UniProtKB" id="P02144"/>
    </source>
</evidence>
<evidence type="ECO:0000250" key="2">
    <source>
        <dbReference type="UniProtKB" id="P02185"/>
    </source>
</evidence>
<evidence type="ECO:0000250" key="3">
    <source>
        <dbReference type="UniProtKB" id="P02189"/>
    </source>
</evidence>
<evidence type="ECO:0000250" key="4">
    <source>
        <dbReference type="UniProtKB" id="P04247"/>
    </source>
</evidence>
<evidence type="ECO:0000250" key="5">
    <source>
        <dbReference type="UniProtKB" id="P68082"/>
    </source>
</evidence>
<evidence type="ECO:0000250" key="6">
    <source>
        <dbReference type="UniProtKB" id="Q9QZ76"/>
    </source>
</evidence>
<evidence type="ECO:0000255" key="7">
    <source>
        <dbReference type="PROSITE-ProRule" id="PRU00238"/>
    </source>
</evidence>
<evidence type="ECO:0000269" key="8">
    <source>
    </source>
</evidence>
<name>MYG_PHOPH</name>
<gene>
    <name type="primary">MB</name>
</gene>
<keyword id="KW-0963">Cytoplasm</keyword>
<keyword id="KW-0903">Direct protein sequencing</keyword>
<keyword id="KW-0349">Heme</keyword>
<keyword id="KW-0408">Iron</keyword>
<keyword id="KW-0479">Metal-binding</keyword>
<keyword id="KW-0514">Muscle protein</keyword>
<keyword id="KW-0560">Oxidoreductase</keyword>
<keyword id="KW-0561">Oxygen transport</keyword>
<keyword id="KW-0597">Phosphoprotein</keyword>
<keyword id="KW-0813">Transport</keyword>
<dbReference type="EC" id="1.7.-.-" evidence="1"/>
<dbReference type="EC" id="1.11.1.-" evidence="1"/>
<dbReference type="PIR" id="B92045">
    <property type="entry name" value="MYPE"/>
</dbReference>
<dbReference type="RefSeq" id="XP_065744472.1">
    <property type="nucleotide sequence ID" value="XM_065888400.1"/>
</dbReference>
<dbReference type="SMR" id="P68278"/>
<dbReference type="GeneID" id="136131586"/>
<dbReference type="GO" id="GO:0070062">
    <property type="term" value="C:extracellular exosome"/>
    <property type="evidence" value="ECO:0007669"/>
    <property type="project" value="TreeGrafter"/>
</dbReference>
<dbReference type="GO" id="GO:0016528">
    <property type="term" value="C:sarcoplasm"/>
    <property type="evidence" value="ECO:0000250"/>
    <property type="project" value="UniProtKB"/>
</dbReference>
<dbReference type="GO" id="GO:0020037">
    <property type="term" value="F:heme binding"/>
    <property type="evidence" value="ECO:0007669"/>
    <property type="project" value="InterPro"/>
</dbReference>
<dbReference type="GO" id="GO:0046872">
    <property type="term" value="F:metal ion binding"/>
    <property type="evidence" value="ECO:0007669"/>
    <property type="project" value="UniProtKB-KW"/>
</dbReference>
<dbReference type="GO" id="GO:0098809">
    <property type="term" value="F:nitrite reductase activity"/>
    <property type="evidence" value="ECO:0000250"/>
    <property type="project" value="UniProtKB"/>
</dbReference>
<dbReference type="GO" id="GO:0019825">
    <property type="term" value="F:oxygen binding"/>
    <property type="evidence" value="ECO:0007669"/>
    <property type="project" value="InterPro"/>
</dbReference>
<dbReference type="GO" id="GO:0005344">
    <property type="term" value="F:oxygen carrier activity"/>
    <property type="evidence" value="ECO:0000250"/>
    <property type="project" value="UniProtKB"/>
</dbReference>
<dbReference type="GO" id="GO:0004601">
    <property type="term" value="F:peroxidase activity"/>
    <property type="evidence" value="ECO:0000250"/>
    <property type="project" value="UniProtKB"/>
</dbReference>
<dbReference type="GO" id="GO:0019430">
    <property type="term" value="P:removal of superoxide radicals"/>
    <property type="evidence" value="ECO:0000250"/>
    <property type="project" value="UniProtKB"/>
</dbReference>
<dbReference type="CDD" id="cd08926">
    <property type="entry name" value="Mb"/>
    <property type="match status" value="1"/>
</dbReference>
<dbReference type="Gene3D" id="6.10.140.2100">
    <property type="match status" value="1"/>
</dbReference>
<dbReference type="Gene3D" id="6.10.140.2110">
    <property type="match status" value="1"/>
</dbReference>
<dbReference type="InterPro" id="IPR000971">
    <property type="entry name" value="Globin"/>
</dbReference>
<dbReference type="InterPro" id="IPR009050">
    <property type="entry name" value="Globin-like_sf"/>
</dbReference>
<dbReference type="InterPro" id="IPR002335">
    <property type="entry name" value="Myoglobin"/>
</dbReference>
<dbReference type="PANTHER" id="PTHR47132">
    <property type="entry name" value="MYOGLOBIN"/>
    <property type="match status" value="1"/>
</dbReference>
<dbReference type="PANTHER" id="PTHR47132:SF1">
    <property type="entry name" value="MYOGLOBIN"/>
    <property type="match status" value="1"/>
</dbReference>
<dbReference type="Pfam" id="PF00042">
    <property type="entry name" value="Globin"/>
    <property type="match status" value="1"/>
</dbReference>
<dbReference type="PRINTS" id="PR00613">
    <property type="entry name" value="MYOGLOBIN"/>
</dbReference>
<dbReference type="SUPFAM" id="SSF46458">
    <property type="entry name" value="Globin-like"/>
    <property type="match status" value="1"/>
</dbReference>
<dbReference type="PROSITE" id="PS01033">
    <property type="entry name" value="GLOBIN"/>
    <property type="match status" value="1"/>
</dbReference>
<organism>
    <name type="scientific">Phocoena phocoena</name>
    <name type="common">Harbor porpoise</name>
    <dbReference type="NCBI Taxonomy" id="9742"/>
    <lineage>
        <taxon>Eukaryota</taxon>
        <taxon>Metazoa</taxon>
        <taxon>Chordata</taxon>
        <taxon>Craniata</taxon>
        <taxon>Vertebrata</taxon>
        <taxon>Euteleostomi</taxon>
        <taxon>Mammalia</taxon>
        <taxon>Eutheria</taxon>
        <taxon>Laurasiatheria</taxon>
        <taxon>Artiodactyla</taxon>
        <taxon>Whippomorpha</taxon>
        <taxon>Cetacea</taxon>
        <taxon>Odontoceti</taxon>
        <taxon>Phocoenidae</taxon>
        <taxon>Phocoena</taxon>
    </lineage>
</organism>
<feature type="initiator methionine" description="Removed" evidence="8">
    <location>
        <position position="1"/>
    </location>
</feature>
<feature type="chain" id="PRO_0000053332" description="Myoglobin">
    <location>
        <begin position="2"/>
        <end position="154"/>
    </location>
</feature>
<feature type="domain" description="Globin" evidence="7">
    <location>
        <begin position="2"/>
        <end position="148"/>
    </location>
</feature>
<feature type="binding site" evidence="5">
    <location>
        <position position="65"/>
    </location>
    <ligand>
        <name>nitrite</name>
        <dbReference type="ChEBI" id="CHEBI:16301"/>
    </ligand>
</feature>
<feature type="binding site" evidence="3 7">
    <location>
        <position position="65"/>
    </location>
    <ligand>
        <name>O2</name>
        <dbReference type="ChEBI" id="CHEBI:15379"/>
    </ligand>
</feature>
<feature type="binding site" description="proximal binding residue" evidence="1">
    <location>
        <position position="94"/>
    </location>
    <ligand>
        <name>heme b</name>
        <dbReference type="ChEBI" id="CHEBI:60344"/>
    </ligand>
    <ligandPart>
        <name>Fe</name>
        <dbReference type="ChEBI" id="CHEBI:18248"/>
    </ligandPart>
</feature>
<feature type="modified residue" description="Phosphoserine" evidence="6">
    <location>
        <position position="4"/>
    </location>
</feature>
<feature type="modified residue" description="Phosphothreonine" evidence="4">
    <location>
        <position position="68"/>
    </location>
</feature>
<sequence length="154" mass="17232">MGLSEGEWQLVLNVWGKVEADLAGHGQDVLIRLFKGHPETLEKFDKFKHLKTEAEMKASEDLKKHGNTVLTALGGILKKKGHHDAELKPLAQSHATKHKIPIKYLEFISEAIIHVLHSRHPAEFGADAQGAMNKALELFRKDIATKYKELGFHG</sequence>
<accession>P68278</accession>
<accession>P02176</accession>
<protein>
    <recommendedName>
        <fullName>Myoglobin</fullName>
    </recommendedName>
    <alternativeName>
        <fullName evidence="1">Nitrite reductase MB</fullName>
        <ecNumber evidence="1">1.7.-.-</ecNumber>
    </alternativeName>
    <alternativeName>
        <fullName evidence="1">Pseudoperoxidase MB</fullName>
        <ecNumber evidence="1">1.11.1.-</ecNumber>
    </alternativeName>
</protein>
<proteinExistence type="evidence at protein level"/>
<reference key="1">
    <citation type="journal article" date="1969" name="J. Biol. Chem.">
        <title>Comparison of myoglobins from harbor seal, porpoise, and sperm whale. V. The complete amino acid sequences of harbor seal and porpoise myoglobins.</title>
        <authorList>
            <person name="Bradshaw R.A."/>
            <person name="Gurd F.R.N."/>
        </authorList>
    </citation>
    <scope>PROTEIN SEQUENCE OF 2-154</scope>
</reference>
<reference key="2">
    <citation type="journal article" date="1978" name="Biochemistry">
        <title>Complete amino acid sequence of the myoglobin from the Dall porpoise (Phocoenoides dalli dalli) and reinvestigation of the primary structure of the myoglobin from common porpoise (Phocoena phocoena).</title>
        <authorList>
            <person name="Meuth J.L."/>
            <person name="Jones B.N."/>
            <person name="Garner W.H."/>
            <person name="Gurd F.R.N."/>
        </authorList>
    </citation>
    <scope>SEQUENCE REVISION TO 84 AND 86</scope>
</reference>
<comment type="function">
    <text evidence="1">Monomeric heme protein which primary function is to store oxygen and facilitate its diffusion within muscle tissues. Reversibly binds oxygen through a pentacoordinated heme iron and enables its timely and efficient release as needed during periods of heightened demand. Depending on the oxidative conditions of tissues and cells, and in addition to its ability to bind oxygen, it also has a nitrite reductase activity whereby it regulates the production of bioactive nitric oxide. Under stress conditions, like hypoxia and anoxia, it also protects cells against reactive oxygen species thanks to its pseudoperoxidase activity.</text>
</comment>
<comment type="catalytic activity">
    <reaction evidence="1">
        <text>Fe(III)-heme b-[protein] + nitric oxide + H2O = Fe(II)-heme b-[protein] + nitrite + 2 H(+)</text>
        <dbReference type="Rhea" id="RHEA:77711"/>
        <dbReference type="Rhea" id="RHEA-COMP:18975"/>
        <dbReference type="Rhea" id="RHEA-COMP:18976"/>
        <dbReference type="ChEBI" id="CHEBI:15377"/>
        <dbReference type="ChEBI" id="CHEBI:15378"/>
        <dbReference type="ChEBI" id="CHEBI:16301"/>
        <dbReference type="ChEBI" id="CHEBI:16480"/>
        <dbReference type="ChEBI" id="CHEBI:55376"/>
        <dbReference type="ChEBI" id="CHEBI:60344"/>
    </reaction>
    <physiologicalReaction direction="right-to-left" evidence="1">
        <dbReference type="Rhea" id="RHEA:77713"/>
    </physiologicalReaction>
</comment>
<comment type="catalytic activity">
    <reaction evidence="1">
        <text>H2O2 + AH2 = A + 2 H2O</text>
        <dbReference type="Rhea" id="RHEA:30275"/>
        <dbReference type="ChEBI" id="CHEBI:13193"/>
        <dbReference type="ChEBI" id="CHEBI:15377"/>
        <dbReference type="ChEBI" id="CHEBI:16240"/>
        <dbReference type="ChEBI" id="CHEBI:17499"/>
    </reaction>
</comment>
<comment type="subunit">
    <text evidence="2">Monomeric.</text>
</comment>
<comment type="subcellular location">
    <subcellularLocation>
        <location evidence="1">Cytoplasm</location>
        <location evidence="1">Sarcoplasm</location>
    </subcellularLocation>
</comment>
<comment type="similarity">
    <text evidence="7">Belongs to the globin family.</text>
</comment>